<organism>
    <name type="scientific">Haemophilus influenzae (strain 86-028NP)</name>
    <dbReference type="NCBI Taxonomy" id="281310"/>
    <lineage>
        <taxon>Bacteria</taxon>
        <taxon>Pseudomonadati</taxon>
        <taxon>Pseudomonadota</taxon>
        <taxon>Gammaproteobacteria</taxon>
        <taxon>Pasteurellales</taxon>
        <taxon>Pasteurellaceae</taxon>
        <taxon>Haemophilus</taxon>
    </lineage>
</organism>
<keyword id="KW-0143">Chaperone</keyword>
<keyword id="KW-0963">Cytoplasm</keyword>
<keyword id="KW-0996">Nickel insertion</keyword>
<proteinExistence type="inferred from homology"/>
<evidence type="ECO:0000255" key="1">
    <source>
        <dbReference type="HAMAP-Rule" id="MF_01385"/>
    </source>
</evidence>
<gene>
    <name evidence="1" type="primary">ureF</name>
    <name type="ordered locus">NTHI0663</name>
</gene>
<protein>
    <recommendedName>
        <fullName evidence="1">Urease accessory protein UreF</fullName>
    </recommendedName>
</protein>
<comment type="function">
    <text evidence="1">Required for maturation of urease via the functional incorporation of the urease nickel metallocenter.</text>
</comment>
<comment type="subunit">
    <text evidence="1">UreD, UreF and UreG form a complex that acts as a GTP-hydrolysis-dependent molecular chaperone, activating the urease apoprotein by helping to assemble the nickel containing metallocenter of UreC. The UreE protein probably delivers the nickel.</text>
</comment>
<comment type="subcellular location">
    <subcellularLocation>
        <location evidence="1">Cytoplasm</location>
    </subcellularLocation>
</comment>
<comment type="similarity">
    <text evidence="1">Belongs to the UreF family.</text>
</comment>
<reference key="1">
    <citation type="journal article" date="2005" name="J. Bacteriol.">
        <title>Genomic sequence of an otitis media isolate of nontypeable Haemophilus influenzae: comparative study with H. influenzae serotype d, strain KW20.</title>
        <authorList>
            <person name="Harrison A."/>
            <person name="Dyer D.W."/>
            <person name="Gillaspy A."/>
            <person name="Ray W.C."/>
            <person name="Mungur R."/>
            <person name="Carson M.B."/>
            <person name="Zhong H."/>
            <person name="Gipson J."/>
            <person name="Gipson M."/>
            <person name="Johnson L.S."/>
            <person name="Lewis L."/>
            <person name="Bakaletz L.O."/>
            <person name="Munson R.S. Jr."/>
        </authorList>
    </citation>
    <scope>NUCLEOTIDE SEQUENCE [LARGE SCALE GENOMIC DNA]</scope>
    <source>
        <strain>86-028NP</strain>
    </source>
</reference>
<name>UREF_HAEI8</name>
<accession>Q4QN11</accession>
<sequence>MAQTLNRSLTDLGALLHLVDPTLPIGGFNHSNGLETFVQQRVVESKATLEEYVQTQLLQNWIYNDGAYLSLAFDAMCEGNFDRLCELDWQLSATKVARESREGSFKLGVRLLKIFIRYETHTLLTAYQQAIAEKRVQGYFPIVFAMVAQAMGLSKADTLYAFYYNAAVGAITNGVKLIPLSQMDGQDILFDLRGSLVQAVELSFDPDEEWLGAATLANDIRAMQHEVLYTRLYMS</sequence>
<feature type="chain" id="PRO_1000145115" description="Urease accessory protein UreF">
    <location>
        <begin position="1"/>
        <end position="235"/>
    </location>
</feature>
<dbReference type="EMBL" id="CP000057">
    <property type="protein sequence ID" value="AAX87586.1"/>
    <property type="molecule type" value="Genomic_DNA"/>
</dbReference>
<dbReference type="RefSeq" id="WP_005688623.1">
    <property type="nucleotide sequence ID" value="NC_007146.2"/>
</dbReference>
<dbReference type="SMR" id="Q4QN11"/>
<dbReference type="GeneID" id="93219546"/>
<dbReference type="KEGG" id="hit:NTHI0663"/>
<dbReference type="HOGENOM" id="CLU_049215_4_2_6"/>
<dbReference type="Proteomes" id="UP000002525">
    <property type="component" value="Chromosome"/>
</dbReference>
<dbReference type="GO" id="GO:0005737">
    <property type="term" value="C:cytoplasm"/>
    <property type="evidence" value="ECO:0007669"/>
    <property type="project" value="UniProtKB-SubCell"/>
</dbReference>
<dbReference type="GO" id="GO:0016151">
    <property type="term" value="F:nickel cation binding"/>
    <property type="evidence" value="ECO:0007669"/>
    <property type="project" value="UniProtKB-UniRule"/>
</dbReference>
<dbReference type="Gene3D" id="1.10.4190.10">
    <property type="entry name" value="Urease accessory protein UreF"/>
    <property type="match status" value="1"/>
</dbReference>
<dbReference type="HAMAP" id="MF_01385">
    <property type="entry name" value="UreF"/>
    <property type="match status" value="1"/>
</dbReference>
<dbReference type="InterPro" id="IPR002639">
    <property type="entry name" value="UreF"/>
</dbReference>
<dbReference type="InterPro" id="IPR038277">
    <property type="entry name" value="UreF_sf"/>
</dbReference>
<dbReference type="PANTHER" id="PTHR33620">
    <property type="entry name" value="UREASE ACCESSORY PROTEIN F"/>
    <property type="match status" value="1"/>
</dbReference>
<dbReference type="PANTHER" id="PTHR33620:SF1">
    <property type="entry name" value="UREASE ACCESSORY PROTEIN F"/>
    <property type="match status" value="1"/>
</dbReference>
<dbReference type="Pfam" id="PF01730">
    <property type="entry name" value="UreF"/>
    <property type="match status" value="1"/>
</dbReference>
<dbReference type="PIRSF" id="PIRSF009467">
    <property type="entry name" value="Ureas_acces_UreF"/>
    <property type="match status" value="1"/>
</dbReference>